<organism>
    <name type="scientific">Oryza sativa subsp. japonica</name>
    <name type="common">Rice</name>
    <dbReference type="NCBI Taxonomy" id="39947"/>
    <lineage>
        <taxon>Eukaryota</taxon>
        <taxon>Viridiplantae</taxon>
        <taxon>Streptophyta</taxon>
        <taxon>Embryophyta</taxon>
        <taxon>Tracheophyta</taxon>
        <taxon>Spermatophyta</taxon>
        <taxon>Magnoliopsida</taxon>
        <taxon>Liliopsida</taxon>
        <taxon>Poales</taxon>
        <taxon>Poaceae</taxon>
        <taxon>BOP clade</taxon>
        <taxon>Oryzoideae</taxon>
        <taxon>Oryzeae</taxon>
        <taxon>Oryzinae</taxon>
        <taxon>Oryza</taxon>
        <taxon>Oryza sativa</taxon>
    </lineage>
</organism>
<evidence type="ECO:0000250" key="1"/>
<evidence type="ECO:0000255" key="2"/>
<evidence type="ECO:0000305" key="3"/>
<reference key="1">
    <citation type="journal article" date="2005" name="Nature">
        <title>The map-based sequence of the rice genome.</title>
        <authorList>
            <consortium name="International rice genome sequencing project (IRGSP)"/>
        </authorList>
    </citation>
    <scope>NUCLEOTIDE SEQUENCE [LARGE SCALE GENOMIC DNA]</scope>
    <source>
        <strain>cv. Nipponbare</strain>
    </source>
</reference>
<reference key="2">
    <citation type="journal article" date="2008" name="Nucleic Acids Res.">
        <title>The rice annotation project database (RAP-DB): 2008 update.</title>
        <authorList>
            <consortium name="The rice annotation project (RAP)"/>
        </authorList>
    </citation>
    <scope>GENOME REANNOTATION</scope>
    <source>
        <strain>cv. Nipponbare</strain>
    </source>
</reference>
<reference key="3">
    <citation type="journal article" date="2013" name="Rice">
        <title>Improvement of the Oryza sativa Nipponbare reference genome using next generation sequence and optical map data.</title>
        <authorList>
            <person name="Kawahara Y."/>
            <person name="de la Bastide M."/>
            <person name="Hamilton J.P."/>
            <person name="Kanamori H."/>
            <person name="McCombie W.R."/>
            <person name="Ouyang S."/>
            <person name="Schwartz D.C."/>
            <person name="Tanaka T."/>
            <person name="Wu J."/>
            <person name="Zhou S."/>
            <person name="Childs K.L."/>
            <person name="Davidson R.M."/>
            <person name="Lin H."/>
            <person name="Quesada-Ocampo L."/>
            <person name="Vaillancourt B."/>
            <person name="Sakai H."/>
            <person name="Lee S.S."/>
            <person name="Kim J."/>
            <person name="Numa H."/>
            <person name="Itoh T."/>
            <person name="Buell C.R."/>
            <person name="Matsumoto T."/>
        </authorList>
    </citation>
    <scope>GENOME REANNOTATION</scope>
    <source>
        <strain>cv. Nipponbare</strain>
    </source>
</reference>
<reference key="4">
    <citation type="journal article" date="2003" name="Science">
        <title>Collection, mapping, and annotation of over 28,000 cDNA clones from japonica rice.</title>
        <authorList>
            <consortium name="The rice full-length cDNA consortium"/>
        </authorList>
    </citation>
    <scope>NUCLEOTIDE SEQUENCE [LARGE SCALE MRNA]</scope>
    <source>
        <strain>cv. Nipponbare</strain>
    </source>
</reference>
<reference key="5">
    <citation type="journal article" date="2009" name="J. Genet. Genomics">
        <title>Molecular evolution and functional divergence of HAK potassium transporter gene family in rice (Oryza sativa L.).</title>
        <authorList>
            <person name="Yang Z."/>
            <person name="Gao Q."/>
            <person name="Sun C."/>
            <person name="Li W."/>
            <person name="Gu S."/>
            <person name="Xu C."/>
        </authorList>
    </citation>
    <scope>GENE FAMILY</scope>
</reference>
<keyword id="KW-0325">Glycoprotein</keyword>
<keyword id="KW-0406">Ion transport</keyword>
<keyword id="KW-0472">Membrane</keyword>
<keyword id="KW-0630">Potassium</keyword>
<keyword id="KW-0633">Potassium transport</keyword>
<keyword id="KW-1185">Reference proteome</keyword>
<keyword id="KW-0812">Transmembrane</keyword>
<keyword id="KW-1133">Transmembrane helix</keyword>
<keyword id="KW-0813">Transport</keyword>
<name>HAK19_ORYSJ</name>
<dbReference type="EMBL" id="AP005845">
    <property type="protein sequence ID" value="BAD26327.1"/>
    <property type="molecule type" value="Genomic_DNA"/>
</dbReference>
<dbReference type="EMBL" id="AP008208">
    <property type="protein sequence ID" value="BAF08880.1"/>
    <property type="molecule type" value="Genomic_DNA"/>
</dbReference>
<dbReference type="EMBL" id="AP014958">
    <property type="protein sequence ID" value="BAS78927.1"/>
    <property type="molecule type" value="Genomic_DNA"/>
</dbReference>
<dbReference type="EMBL" id="AK106353">
    <property type="protein sequence ID" value="BAG97690.1"/>
    <property type="molecule type" value="mRNA"/>
</dbReference>
<dbReference type="RefSeq" id="XP_015623439.1">
    <property type="nucleotide sequence ID" value="XM_015767953.1"/>
</dbReference>
<dbReference type="RefSeq" id="XP_015623440.1">
    <property type="nucleotide sequence ID" value="XM_015767954.1"/>
</dbReference>
<dbReference type="RefSeq" id="XP_015623441.1">
    <property type="nucleotide sequence ID" value="XM_015767955.1"/>
</dbReference>
<dbReference type="FunCoup" id="Q6H4M2">
    <property type="interactions" value="26"/>
</dbReference>
<dbReference type="STRING" id="39947.Q6H4M2"/>
<dbReference type="GlyCosmos" id="Q6H4M2">
    <property type="glycosylation" value="1 site, No reported glycans"/>
</dbReference>
<dbReference type="PaxDb" id="39947-Q6H4M2"/>
<dbReference type="EnsemblPlants" id="Os02t0518600-01">
    <property type="protein sequence ID" value="Os02t0518600-01"/>
    <property type="gene ID" value="Os02g0518600"/>
</dbReference>
<dbReference type="Gramene" id="Os02t0518600-01">
    <property type="protein sequence ID" value="Os02t0518600-01"/>
    <property type="gene ID" value="Os02g0518600"/>
</dbReference>
<dbReference type="KEGG" id="dosa:Os02g0518600"/>
<dbReference type="eggNOG" id="ENOG502QPSA">
    <property type="taxonomic scope" value="Eukaryota"/>
</dbReference>
<dbReference type="HOGENOM" id="CLU_008142_2_2_1"/>
<dbReference type="InParanoid" id="Q6H4M2"/>
<dbReference type="OMA" id="YNLTVHE"/>
<dbReference type="OrthoDB" id="504708at2759"/>
<dbReference type="Proteomes" id="UP000000763">
    <property type="component" value="Chromosome 2"/>
</dbReference>
<dbReference type="Proteomes" id="UP000059680">
    <property type="component" value="Chromosome 2"/>
</dbReference>
<dbReference type="GO" id="GO:0016020">
    <property type="term" value="C:membrane"/>
    <property type="evidence" value="ECO:0000318"/>
    <property type="project" value="GO_Central"/>
</dbReference>
<dbReference type="GO" id="GO:0015079">
    <property type="term" value="F:potassium ion transmembrane transporter activity"/>
    <property type="evidence" value="ECO:0000318"/>
    <property type="project" value="GO_Central"/>
</dbReference>
<dbReference type="GO" id="GO:0006813">
    <property type="term" value="P:potassium ion transport"/>
    <property type="evidence" value="ECO:0000318"/>
    <property type="project" value="GO_Central"/>
</dbReference>
<dbReference type="InterPro" id="IPR003855">
    <property type="entry name" value="K+_transporter"/>
</dbReference>
<dbReference type="InterPro" id="IPR053952">
    <property type="entry name" value="K_trans_C"/>
</dbReference>
<dbReference type="InterPro" id="IPR053951">
    <property type="entry name" value="K_trans_N"/>
</dbReference>
<dbReference type="NCBIfam" id="TIGR00794">
    <property type="entry name" value="kup"/>
    <property type="match status" value="1"/>
</dbReference>
<dbReference type="PANTHER" id="PTHR30540">
    <property type="entry name" value="OSMOTIC STRESS POTASSIUM TRANSPORTER"/>
    <property type="match status" value="1"/>
</dbReference>
<dbReference type="PANTHER" id="PTHR30540:SF15">
    <property type="entry name" value="POTASSIUM TRANSPORTER 19"/>
    <property type="match status" value="1"/>
</dbReference>
<dbReference type="Pfam" id="PF02705">
    <property type="entry name" value="K_trans"/>
    <property type="match status" value="1"/>
</dbReference>
<dbReference type="Pfam" id="PF22776">
    <property type="entry name" value="K_trans_C"/>
    <property type="match status" value="1"/>
</dbReference>
<proteinExistence type="evidence at transcript level"/>
<accession>Q6H4M2</accession>
<accession>A0A0P0VJR7</accession>
<feature type="chain" id="PRO_0000379534" description="Potassium transporter 19">
    <location>
        <begin position="1"/>
        <end position="742"/>
    </location>
</feature>
<feature type="topological domain" description="Cytoplasmic" evidence="2">
    <location>
        <begin position="1"/>
        <end position="46"/>
    </location>
</feature>
<feature type="transmembrane region" description="Helical; Name=1" evidence="2">
    <location>
        <begin position="47"/>
        <end position="67"/>
    </location>
</feature>
<feature type="topological domain" description="Extracellular" evidence="2">
    <location>
        <begin position="68"/>
        <end position="83"/>
    </location>
</feature>
<feature type="transmembrane region" description="Helical; Name=2" evidence="2">
    <location>
        <begin position="84"/>
        <end position="104"/>
    </location>
</feature>
<feature type="topological domain" description="Cytoplasmic" evidence="2">
    <location>
        <begin position="105"/>
        <end position="170"/>
    </location>
</feature>
<feature type="transmembrane region" description="Helical; Name=3" evidence="2">
    <location>
        <begin position="171"/>
        <end position="191"/>
    </location>
</feature>
<feature type="topological domain" description="Extracellular" evidence="2">
    <location>
        <begin position="192"/>
        <end position="206"/>
    </location>
</feature>
<feature type="transmembrane region" description="Helical; Name=4" evidence="2">
    <location>
        <begin position="207"/>
        <end position="227"/>
    </location>
</feature>
<feature type="topological domain" description="Cytoplasmic" evidence="2">
    <location>
        <begin position="228"/>
        <end position="236"/>
    </location>
</feature>
<feature type="transmembrane region" description="Helical; Name=5" evidence="2">
    <location>
        <begin position="237"/>
        <end position="257"/>
    </location>
</feature>
<feature type="topological domain" description="Extracellular" evidence="2">
    <location>
        <begin position="258"/>
        <end position="287"/>
    </location>
</feature>
<feature type="transmembrane region" description="Helical; Name=6" evidence="2">
    <location>
        <begin position="288"/>
        <end position="308"/>
    </location>
</feature>
<feature type="topological domain" description="Cytoplasmic" evidence="2">
    <location>
        <begin position="309"/>
        <end position="317"/>
    </location>
</feature>
<feature type="transmembrane region" description="Helical; Name=7" evidence="2">
    <location>
        <begin position="318"/>
        <end position="338"/>
    </location>
</feature>
<feature type="topological domain" description="Extracellular" evidence="2">
    <location>
        <begin position="339"/>
        <end position="352"/>
    </location>
</feature>
<feature type="transmembrane region" description="Helical; Name=8" evidence="2">
    <location>
        <begin position="353"/>
        <end position="373"/>
    </location>
</feature>
<feature type="topological domain" description="Cytoplasmic" evidence="2">
    <location>
        <begin position="374"/>
        <end position="409"/>
    </location>
</feature>
<feature type="transmembrane region" description="Helical; Name=9" evidence="2">
    <location>
        <begin position="410"/>
        <end position="430"/>
    </location>
</feature>
<feature type="topological domain" description="Extracellular" evidence="2">
    <location>
        <begin position="431"/>
        <end position="441"/>
    </location>
</feature>
<feature type="transmembrane region" description="Helical; Name=10" evidence="2">
    <location>
        <begin position="442"/>
        <end position="462"/>
    </location>
</feature>
<feature type="topological domain" description="Cytoplasmic" evidence="2">
    <location>
        <begin position="463"/>
        <end position="468"/>
    </location>
</feature>
<feature type="transmembrane region" description="Helical; Name=11" evidence="2">
    <location>
        <begin position="469"/>
        <end position="489"/>
    </location>
</feature>
<feature type="topological domain" description="Extracellular" evidence="2">
    <location>
        <begin position="490"/>
        <end position="495"/>
    </location>
</feature>
<feature type="transmembrane region" description="Helical; Name=12" evidence="2">
    <location>
        <begin position="496"/>
        <end position="516"/>
    </location>
</feature>
<feature type="topological domain" description="Cytoplasmic" evidence="2">
    <location>
        <begin position="517"/>
        <end position="742"/>
    </location>
</feature>
<feature type="glycosylation site" description="N-linked (GlcNAc...) asparagine" evidence="2">
    <location>
        <position position="259"/>
    </location>
</feature>
<gene>
    <name type="primary">HAK19</name>
    <name type="ordered locus">Os02g0518600</name>
    <name type="ordered locus">LOC_Os02g31910</name>
    <name type="ORF">P0461D06.12</name>
</gene>
<comment type="function">
    <text evidence="1">High-affinity potassium transporter.</text>
</comment>
<comment type="subcellular location">
    <subcellularLocation>
        <location evidence="3">Membrane</location>
        <topology evidence="3">Multi-pass membrane protein</topology>
    </subcellularLocation>
</comment>
<comment type="similarity">
    <text evidence="3">Belongs to the HAK/KUP transporter (TC 2.A.72.3) family.</text>
</comment>
<sequence>MSVQEDGAARPEPDVLRRHDSLYGDAEKVSNNKRHGAGGSWARTLQLAFQSIGVVYGDVGTSPLYVYSSTFPNGIKHPDDLVGVLSLILYTLILIPMVKYVFIVLYANDNGDGGTFALYSLISRHAKIRMIPNDQTEDANVSNYSIEAPSSQLRRAEWVKQKLESSNAAKIALFTITILGTSMVMGDGTLTPAISVLSAVSGIREKAPNLTQSQVVWISVAILFVLFSMQRFGTDKVGYTFAPVISVWFLLIAGIGMYNLTVHEITILRAFNPKYIVDYFRRNGKEAWVSLGGVVLCITGTEAMFADLGHFNIRAIQLSFTCVLFPSVALCYMGQAAYLRKFPENVGDTFYRSIPAPLFWPVFVVAIMGAIIASQAMLSGAFAILSKALSLGCFPRVEVVHTSNKYEGQVYIPEVNFLIGAASVAVTLAFQTTANIGNAYGICVVTVFSITTHLMTVVMLLIWKVRLPFIAAFYAAFGLAEFLYLSSILSKFAEGGYLPFCFSLVLMALMATWHYVHVKRYWYELDRVVPAAETTALLARRDVRRVPGVGLLYSELVQGIPPVFPRLVDKIPSVHAVFVFMSIKHLPVPRVAPAERFIFRRVVGADAGAGHRLFRCVARYGYTDQLEGAKEFAAFLLDRLKVFVHEESVFACSRGDNDDDDAMRRAQAMAEEEKRVIDAEAERGVVYLMGEANVTAAAGSSVMKRIVVNYVYTLLRKNLREGHKALSVPKDQLLKVGITYEI</sequence>
<protein>
    <recommendedName>
        <fullName>Potassium transporter 19</fullName>
    </recommendedName>
    <alternativeName>
        <fullName>OsHAK19</fullName>
    </alternativeName>
</protein>